<dbReference type="EC" id="2.7.1.-" evidence="1"/>
<dbReference type="EMBL" id="CU928163">
    <property type="protein sequence ID" value="CAR13609.1"/>
    <property type="molecule type" value="Genomic_DNA"/>
</dbReference>
<dbReference type="RefSeq" id="WP_000807371.1">
    <property type="nucleotide sequence ID" value="NC_011751.1"/>
</dbReference>
<dbReference type="RefSeq" id="YP_002413137.1">
    <property type="nucleotide sequence ID" value="NC_011751.1"/>
</dbReference>
<dbReference type="SMR" id="B7NCB9"/>
<dbReference type="STRING" id="585056.ECUMN_2421"/>
<dbReference type="KEGG" id="eum:ECUMN_2421"/>
<dbReference type="PATRIC" id="fig|585056.7.peg.2602"/>
<dbReference type="HOGENOM" id="CLU_045532_1_1_6"/>
<dbReference type="Proteomes" id="UP000007097">
    <property type="component" value="Chromosome"/>
</dbReference>
<dbReference type="GO" id="GO:0005737">
    <property type="term" value="C:cytoplasm"/>
    <property type="evidence" value="ECO:0007669"/>
    <property type="project" value="UniProtKB-SubCell"/>
</dbReference>
<dbReference type="GO" id="GO:0005886">
    <property type="term" value="C:plasma membrane"/>
    <property type="evidence" value="ECO:0007669"/>
    <property type="project" value="TreeGrafter"/>
</dbReference>
<dbReference type="GO" id="GO:0005524">
    <property type="term" value="F:ATP binding"/>
    <property type="evidence" value="ECO:0007669"/>
    <property type="project" value="UniProtKB-UniRule"/>
</dbReference>
<dbReference type="GO" id="GO:0001727">
    <property type="term" value="F:lipid kinase activity"/>
    <property type="evidence" value="ECO:0007669"/>
    <property type="project" value="UniProtKB-UniRule"/>
</dbReference>
<dbReference type="GO" id="GO:0000287">
    <property type="term" value="F:magnesium ion binding"/>
    <property type="evidence" value="ECO:0007669"/>
    <property type="project" value="UniProtKB-UniRule"/>
</dbReference>
<dbReference type="GO" id="GO:0008654">
    <property type="term" value="P:phospholipid biosynthetic process"/>
    <property type="evidence" value="ECO:0007669"/>
    <property type="project" value="UniProtKB-UniRule"/>
</dbReference>
<dbReference type="FunFam" id="2.60.200.40:FF:000008">
    <property type="entry name" value="Probable lipid kinase YegS"/>
    <property type="match status" value="1"/>
</dbReference>
<dbReference type="FunFam" id="3.40.50.10330:FF:000008">
    <property type="entry name" value="Probable lipid kinase YegS"/>
    <property type="match status" value="1"/>
</dbReference>
<dbReference type="Gene3D" id="2.60.200.40">
    <property type="match status" value="1"/>
</dbReference>
<dbReference type="Gene3D" id="3.40.50.10330">
    <property type="entry name" value="Probable inorganic polyphosphate/atp-NAD kinase, domain 1"/>
    <property type="match status" value="1"/>
</dbReference>
<dbReference type="HAMAP" id="MF_01377">
    <property type="entry name" value="YegS"/>
    <property type="match status" value="1"/>
</dbReference>
<dbReference type="InterPro" id="IPR017438">
    <property type="entry name" value="ATP-NAD_kinase_N"/>
</dbReference>
<dbReference type="InterPro" id="IPR005218">
    <property type="entry name" value="Diacylglycerol/lipid_kinase"/>
</dbReference>
<dbReference type="InterPro" id="IPR001206">
    <property type="entry name" value="Diacylglycerol_kinase_cat_dom"/>
</dbReference>
<dbReference type="InterPro" id="IPR022433">
    <property type="entry name" value="Lip_kinase_YegS"/>
</dbReference>
<dbReference type="InterPro" id="IPR050187">
    <property type="entry name" value="Lipid_Phosphate_FormReg"/>
</dbReference>
<dbReference type="InterPro" id="IPR016064">
    <property type="entry name" value="NAD/diacylglycerol_kinase_sf"/>
</dbReference>
<dbReference type="InterPro" id="IPR045540">
    <property type="entry name" value="YegS/DAGK_C"/>
</dbReference>
<dbReference type="NCBIfam" id="TIGR03702">
    <property type="entry name" value="lip_kinase_YegS"/>
    <property type="match status" value="1"/>
</dbReference>
<dbReference type="NCBIfam" id="NF009602">
    <property type="entry name" value="PRK13054.1"/>
    <property type="match status" value="1"/>
</dbReference>
<dbReference type="NCBIfam" id="TIGR00147">
    <property type="entry name" value="YegS/Rv2252/BmrU family lipid kinase"/>
    <property type="match status" value="1"/>
</dbReference>
<dbReference type="PANTHER" id="PTHR12358:SF106">
    <property type="entry name" value="LIPID KINASE YEGS"/>
    <property type="match status" value="1"/>
</dbReference>
<dbReference type="PANTHER" id="PTHR12358">
    <property type="entry name" value="SPHINGOSINE KINASE"/>
    <property type="match status" value="1"/>
</dbReference>
<dbReference type="Pfam" id="PF00781">
    <property type="entry name" value="DAGK_cat"/>
    <property type="match status" value="1"/>
</dbReference>
<dbReference type="Pfam" id="PF19279">
    <property type="entry name" value="YegS_C"/>
    <property type="match status" value="1"/>
</dbReference>
<dbReference type="SMART" id="SM00046">
    <property type="entry name" value="DAGKc"/>
    <property type="match status" value="1"/>
</dbReference>
<dbReference type="SUPFAM" id="SSF111331">
    <property type="entry name" value="NAD kinase/diacylglycerol kinase-like"/>
    <property type="match status" value="1"/>
</dbReference>
<dbReference type="PROSITE" id="PS50146">
    <property type="entry name" value="DAGK"/>
    <property type="match status" value="1"/>
</dbReference>
<evidence type="ECO:0000255" key="1">
    <source>
        <dbReference type="HAMAP-Rule" id="MF_01377"/>
    </source>
</evidence>
<proteinExistence type="inferred from homology"/>
<organism>
    <name type="scientific">Escherichia coli O17:K52:H18 (strain UMN026 / ExPEC)</name>
    <dbReference type="NCBI Taxonomy" id="585056"/>
    <lineage>
        <taxon>Bacteria</taxon>
        <taxon>Pseudomonadati</taxon>
        <taxon>Pseudomonadota</taxon>
        <taxon>Gammaproteobacteria</taxon>
        <taxon>Enterobacterales</taxon>
        <taxon>Enterobacteriaceae</taxon>
        <taxon>Escherichia</taxon>
    </lineage>
</organism>
<keyword id="KW-0067">ATP-binding</keyword>
<keyword id="KW-0963">Cytoplasm</keyword>
<keyword id="KW-0418">Kinase</keyword>
<keyword id="KW-0444">Lipid biosynthesis</keyword>
<keyword id="KW-0443">Lipid metabolism</keyword>
<keyword id="KW-0460">Magnesium</keyword>
<keyword id="KW-0479">Metal-binding</keyword>
<keyword id="KW-0547">Nucleotide-binding</keyword>
<keyword id="KW-0594">Phospholipid biosynthesis</keyword>
<keyword id="KW-1208">Phospholipid metabolism</keyword>
<keyword id="KW-0808">Transferase</keyword>
<feature type="chain" id="PRO_1000144867" description="Probable lipid kinase YegS">
    <location>
        <begin position="1"/>
        <end position="299"/>
    </location>
</feature>
<feature type="domain" description="DAGKc" evidence="1">
    <location>
        <begin position="2"/>
        <end position="133"/>
    </location>
</feature>
<feature type="active site" description="Proton acceptor" evidence="1">
    <location>
        <position position="271"/>
    </location>
</feature>
<feature type="binding site" evidence="1">
    <location>
        <position position="40"/>
    </location>
    <ligand>
        <name>ATP</name>
        <dbReference type="ChEBI" id="CHEBI:30616"/>
    </ligand>
</feature>
<feature type="binding site" evidence="1">
    <location>
        <begin position="66"/>
        <end position="72"/>
    </location>
    <ligand>
        <name>ATP</name>
        <dbReference type="ChEBI" id="CHEBI:30616"/>
    </ligand>
</feature>
<feature type="binding site" evidence="1">
    <location>
        <position position="95"/>
    </location>
    <ligand>
        <name>ATP</name>
        <dbReference type="ChEBI" id="CHEBI:30616"/>
    </ligand>
</feature>
<feature type="binding site" evidence="1">
    <location>
        <position position="215"/>
    </location>
    <ligand>
        <name>Mg(2+)</name>
        <dbReference type="ChEBI" id="CHEBI:18420"/>
    </ligand>
</feature>
<feature type="binding site" evidence="1">
    <location>
        <position position="218"/>
    </location>
    <ligand>
        <name>Mg(2+)</name>
        <dbReference type="ChEBI" id="CHEBI:18420"/>
    </ligand>
</feature>
<feature type="binding site" evidence="1">
    <location>
        <position position="220"/>
    </location>
    <ligand>
        <name>Mg(2+)</name>
        <dbReference type="ChEBI" id="CHEBI:18420"/>
    </ligand>
</feature>
<name>YEGS_ECOLU</name>
<protein>
    <recommendedName>
        <fullName evidence="1">Probable lipid kinase YegS</fullName>
        <ecNumber evidence="1">2.7.1.-</ecNumber>
    </recommendedName>
</protein>
<gene>
    <name evidence="1" type="primary">yegS</name>
    <name type="ordered locus">ECUMN_2421</name>
</gene>
<comment type="function">
    <text evidence="1">Probably phosphorylates lipids; the in vivo substrate is unknown.</text>
</comment>
<comment type="cofactor">
    <cofactor evidence="1">
        <name>Mg(2+)</name>
        <dbReference type="ChEBI" id="CHEBI:18420"/>
    </cofactor>
    <cofactor evidence="1">
        <name>Ca(2+)</name>
        <dbReference type="ChEBI" id="CHEBI:29108"/>
    </cofactor>
    <text evidence="1">Binds 1 Mg(2+) ion per subunit. Ca(2+) may be able to substitute.</text>
</comment>
<comment type="subcellular location">
    <subcellularLocation>
        <location evidence="1">Cytoplasm</location>
    </subcellularLocation>
</comment>
<comment type="similarity">
    <text evidence="1">Belongs to the diacylglycerol/lipid kinase family. YegS lipid kinase subfamily.</text>
</comment>
<accession>B7NCB9</accession>
<reference key="1">
    <citation type="journal article" date="2009" name="PLoS Genet.">
        <title>Organised genome dynamics in the Escherichia coli species results in highly diverse adaptive paths.</title>
        <authorList>
            <person name="Touchon M."/>
            <person name="Hoede C."/>
            <person name="Tenaillon O."/>
            <person name="Barbe V."/>
            <person name="Baeriswyl S."/>
            <person name="Bidet P."/>
            <person name="Bingen E."/>
            <person name="Bonacorsi S."/>
            <person name="Bouchier C."/>
            <person name="Bouvet O."/>
            <person name="Calteau A."/>
            <person name="Chiapello H."/>
            <person name="Clermont O."/>
            <person name="Cruveiller S."/>
            <person name="Danchin A."/>
            <person name="Diard M."/>
            <person name="Dossat C."/>
            <person name="Karoui M.E."/>
            <person name="Frapy E."/>
            <person name="Garry L."/>
            <person name="Ghigo J.M."/>
            <person name="Gilles A.M."/>
            <person name="Johnson J."/>
            <person name="Le Bouguenec C."/>
            <person name="Lescat M."/>
            <person name="Mangenot S."/>
            <person name="Martinez-Jehanne V."/>
            <person name="Matic I."/>
            <person name="Nassif X."/>
            <person name="Oztas S."/>
            <person name="Petit M.A."/>
            <person name="Pichon C."/>
            <person name="Rouy Z."/>
            <person name="Ruf C.S."/>
            <person name="Schneider D."/>
            <person name="Tourret J."/>
            <person name="Vacherie B."/>
            <person name="Vallenet D."/>
            <person name="Medigue C."/>
            <person name="Rocha E.P.C."/>
            <person name="Denamur E."/>
        </authorList>
    </citation>
    <scope>NUCLEOTIDE SEQUENCE [LARGE SCALE GENOMIC DNA]</scope>
    <source>
        <strain>UMN026 / ExPEC</strain>
    </source>
</reference>
<sequence length="299" mass="32088">MAEFPASLLILNGKSTDNLPLREAIMLLREEGMTIHVRVTWEKGDAARYVEEARKLGVATVIAGGGDGTINEVSTALIQCEGDDIPALGILPLGTANDFATSVRIPEALDKALKLAIAGDAIAIDMAQVNKQTCFINMATGGFGTRITTETPEKLKAALGGVSYIIHGLMRMDTLQPDRCEIRGENFHWQGDALVIGIGNGRQAGGGQQLCPNALINDGLLQLRIFTGDEILPALVSTLKSDEDNPNIIEGASSWFDIQAPHEITFNLDGEPLSGQNFHIEILPAALRCRLPPDCPLLR</sequence>